<name>PDLI7_BOVIN</name>
<feature type="chain" id="PRO_0000075880" description="PDZ and LIM domain protein 7">
    <location>
        <begin position="1"/>
        <end position="424"/>
    </location>
</feature>
<feature type="domain" description="PDZ" evidence="5">
    <location>
        <begin position="1"/>
        <end position="85"/>
    </location>
</feature>
<feature type="domain" description="LIM zinc-binding 1" evidence="4">
    <location>
        <begin position="247"/>
        <end position="305"/>
    </location>
</feature>
<feature type="domain" description="LIM zinc-binding 2" evidence="4">
    <location>
        <begin position="306"/>
        <end position="365"/>
    </location>
</feature>
<feature type="domain" description="LIM zinc-binding 3" evidence="4">
    <location>
        <begin position="366"/>
        <end position="424"/>
    </location>
</feature>
<feature type="region of interest" description="Disordered" evidence="6">
    <location>
        <begin position="81"/>
        <end position="221"/>
    </location>
</feature>
<feature type="compositionally biased region" description="Polar residues" evidence="6">
    <location>
        <begin position="81"/>
        <end position="98"/>
    </location>
</feature>
<feature type="compositionally biased region" description="Basic and acidic residues" evidence="6">
    <location>
        <begin position="110"/>
        <end position="123"/>
    </location>
</feature>
<feature type="compositionally biased region" description="Pro residues" evidence="6">
    <location>
        <begin position="174"/>
        <end position="187"/>
    </location>
</feature>
<feature type="compositionally biased region" description="Polar residues" evidence="6">
    <location>
        <begin position="204"/>
        <end position="221"/>
    </location>
</feature>
<feature type="modified residue" description="Phosphoserine" evidence="2">
    <location>
        <position position="78"/>
    </location>
</feature>
<feature type="modified residue" description="Phosphothreonine" evidence="3">
    <location>
        <position position="96"/>
    </location>
</feature>
<feature type="splice variant" id="VSP_016506" description="In isoform 2." evidence="7">
    <original>VQTPDK</original>
    <variation>ALAPAADPPRYTFAPSASLNKTARPFGANPPADSAPQQNG</variation>
    <location>
        <begin position="94"/>
        <end position="99"/>
    </location>
</feature>
<feature type="splice variant" id="VSP_016507" description="In isoform 2." evidence="7">
    <original>SQVPRTEAPTPASATPQEPWPGPTTPSPTSRP</original>
    <variation>REKYVLELQSPRYTRLRDWHHQRSAHVLNVQS</variation>
    <location>
        <begin position="157"/>
        <end position="188"/>
    </location>
</feature>
<feature type="splice variant" id="VSP_016508" description="In isoform 2." evidence="7">
    <location>
        <begin position="189"/>
        <end position="424"/>
    </location>
</feature>
<sequence>MDSFKVVLEGPAPWGFRLQGGKDFNVPLSISRLTPGGKAAQAGVAVGDWVLSIDGENAGGLTHIEAQNKIRACGERLSLSLSRAQPAQSKPQKVQTPDKQPLRPLVPDASKQRLMEDTEDWRPRPGTGQSRSFRILAHLTGTEFMQDPDEEHLKKSSQVPRTEAPTPASATPQEPWPGPTTPSPTSRPPWAVDPAFAERYAPDKTSTVLTRHTQPATPTPMQNRTSIVQAAAGGGHGGGGGSNGKTPVCHQCHKVIRGRYLVALGRAYHPEEFVCSQCGKVLEEGGFFEEKGAIFCPPCYDVRYAPSCAKCKKKITGEVMHALKTTWHVHCFTCAACKAPIRNRAFYMEEGAPYCEPDYEKMFGTKCRGCDFKIDAGDRFLEALGFSWHDTCFVCAICQINLEGKTFYSKKDKPLCKSHAFSHV</sequence>
<gene>
    <name type="primary">PDLIM7</name>
</gene>
<comment type="function">
    <text evidence="1">May function as a scaffold on which the coordinated assembly of proteins can occur. May play a role as an adapter that, via its PDZ domain, localizes LIM-binding proteins to actin filaments of both skeletal muscle and nonmuscle tissues. Involved in both of the two fundamental mechanisms of bone formation, direct bone formation (e.g. embryonic flat bones mandible and cranium), and endochondral bone formation (e.g. embryonic long bone development). Plays a role during fracture repair. Involved in BMP6 signaling pathway (By similarity).</text>
</comment>
<comment type="subunit">
    <text evidence="1">Binds via its LIM zinc-binding 3 domain (LIM 3) domain to endocytic codes of INSR, but not with those of IGF1R, LDLR, TFRC, or EGFR. Interacts with various PKC isoforms through the LIM zinc-binding domains. Binds to RET in a phosphorylation-independent manner via its LIM zinc-binding 2 domain (LIM 2). Probably part of a complex with SHC and the RET dimer. Interacts with TPM2, TBX4 and TBX5 (By similarity).</text>
</comment>
<comment type="subcellular location">
    <subcellularLocation>
        <location evidence="1">Cytoplasm</location>
    </subcellularLocation>
    <subcellularLocation>
        <location evidence="1">Cytoplasm</location>
        <location evidence="1">Cytoskeleton</location>
    </subcellularLocation>
    <text evidence="1">Colocalizes with RET to the cell periphery and in some cytoskeletal components. Colocalizes with TPM2 near the Z line in muscle. Colocalizes with TBX4 and TBX5 to actin filaments (By similarity).</text>
</comment>
<comment type="alternative products">
    <event type="alternative splicing"/>
    <isoform>
        <id>Q3SX40-1</id>
        <name>1</name>
        <sequence type="displayed"/>
    </isoform>
    <isoform>
        <id>Q3SX40-2</id>
        <name>2</name>
        <sequence type="described" ref="VSP_016506 VSP_016507 VSP_016508"/>
    </isoform>
</comment>
<comment type="domain">
    <text evidence="1">The LIM zinc-binding 2 (LIM 2) interacts with TBX4.</text>
</comment>
<comment type="domain">
    <text evidence="1">The LIM zinc-binding 3 (LIM 3) domain provides the structural basis for recognition of tyrosine-containing tight turn structures. This domain is necessary and sufficient for interaction with TBX5 (By similarity).</text>
</comment>
<comment type="domain">
    <text evidence="1">Anchored to cell periphery via its N-terminal PDZ domain.</text>
</comment>
<evidence type="ECO:0000250" key="1"/>
<evidence type="ECO:0000250" key="2">
    <source>
        <dbReference type="UniProtKB" id="Q9NR12"/>
    </source>
</evidence>
<evidence type="ECO:0000250" key="3">
    <source>
        <dbReference type="UniProtKB" id="Q9Z1Z9"/>
    </source>
</evidence>
<evidence type="ECO:0000255" key="4">
    <source>
        <dbReference type="PROSITE-ProRule" id="PRU00125"/>
    </source>
</evidence>
<evidence type="ECO:0000255" key="5">
    <source>
        <dbReference type="PROSITE-ProRule" id="PRU00143"/>
    </source>
</evidence>
<evidence type="ECO:0000256" key="6">
    <source>
        <dbReference type="SAM" id="MobiDB-lite"/>
    </source>
</evidence>
<evidence type="ECO:0000303" key="7">
    <source>
    </source>
</evidence>
<keyword id="KW-0025">Alternative splicing</keyword>
<keyword id="KW-0963">Cytoplasm</keyword>
<keyword id="KW-0206">Cytoskeleton</keyword>
<keyword id="KW-0217">Developmental protein</keyword>
<keyword id="KW-0221">Differentiation</keyword>
<keyword id="KW-0440">LIM domain</keyword>
<keyword id="KW-0479">Metal-binding</keyword>
<keyword id="KW-0892">Osteogenesis</keyword>
<keyword id="KW-0597">Phosphoprotein</keyword>
<keyword id="KW-1185">Reference proteome</keyword>
<keyword id="KW-0677">Repeat</keyword>
<keyword id="KW-0862">Zinc</keyword>
<reference key="1">
    <citation type="journal article" date="2005" name="BMC Genomics">
        <title>Characterization of 954 bovine full-CDS cDNA sequences.</title>
        <authorList>
            <person name="Harhay G.P."/>
            <person name="Sonstegard T.S."/>
            <person name="Keele J.W."/>
            <person name="Heaton M.P."/>
            <person name="Clawson M.L."/>
            <person name="Snelling W.M."/>
            <person name="Wiedmann R.T."/>
            <person name="Van Tassell C.P."/>
            <person name="Smith T.P.L."/>
        </authorList>
    </citation>
    <scope>NUCLEOTIDE SEQUENCE [LARGE SCALE MRNA] (ISOFORM 2)</scope>
</reference>
<reference key="2">
    <citation type="submission" date="2005-09" db="EMBL/GenBank/DDBJ databases">
        <authorList>
            <consortium name="NIH - Mammalian Gene Collection (MGC) project"/>
        </authorList>
    </citation>
    <scope>NUCLEOTIDE SEQUENCE [LARGE SCALE MRNA] (ISOFORM 1)</scope>
    <source>
        <strain>Hereford</strain>
        <tissue>Ascending colon</tissue>
    </source>
</reference>
<dbReference type="EMBL" id="BT020909">
    <property type="protein sequence ID" value="AAX08926.1"/>
    <property type="molecule type" value="mRNA"/>
</dbReference>
<dbReference type="EMBL" id="BC104521">
    <property type="protein sequence ID" value="AAI04522.1"/>
    <property type="molecule type" value="mRNA"/>
</dbReference>
<dbReference type="RefSeq" id="NP_001017947.1">
    <molecule id="Q3SX40-2"/>
    <property type="nucleotide sequence ID" value="NM_001017947.1"/>
</dbReference>
<dbReference type="RefSeq" id="NP_001106722.1">
    <molecule id="Q3SX40-1"/>
    <property type="nucleotide sequence ID" value="NM_001113251.1"/>
</dbReference>
<dbReference type="RefSeq" id="XP_005209262.1">
    <molecule id="Q3SX40-2"/>
    <property type="nucleotide sequence ID" value="XM_005209205.5"/>
</dbReference>
<dbReference type="RefSeq" id="XP_010805461.1">
    <molecule id="Q3SX40-2"/>
    <property type="nucleotide sequence ID" value="XM_010807159.4"/>
</dbReference>
<dbReference type="SMR" id="Q3SX40"/>
<dbReference type="FunCoup" id="Q3SX40">
    <property type="interactions" value="365"/>
</dbReference>
<dbReference type="PaxDb" id="9913-ENSBTAP00000024902"/>
<dbReference type="Ensembl" id="ENSBTAT00000084797.2">
    <molecule id="Q3SX40-1"/>
    <property type="protein sequence ID" value="ENSBTAP00000057436.2"/>
    <property type="gene ID" value="ENSBTAG00000069499.1"/>
</dbReference>
<dbReference type="GeneID" id="533851"/>
<dbReference type="KEGG" id="bta:533851"/>
<dbReference type="CTD" id="9260"/>
<dbReference type="VEuPathDB" id="HostDB:ENSBTAG00000011400"/>
<dbReference type="eggNOG" id="KOG1703">
    <property type="taxonomic scope" value="Eukaryota"/>
</dbReference>
<dbReference type="GeneTree" id="ENSGT00940000159626"/>
<dbReference type="HOGENOM" id="CLU_001357_8_1_1"/>
<dbReference type="InParanoid" id="Q3SX40"/>
<dbReference type="OrthoDB" id="5911912at2759"/>
<dbReference type="Reactome" id="R-BTA-8853659">
    <property type="pathway name" value="RET signaling"/>
</dbReference>
<dbReference type="Proteomes" id="UP000009136">
    <property type="component" value="Chromosome 7"/>
</dbReference>
<dbReference type="Bgee" id="ENSBTAG00000011400">
    <property type="expression patterns" value="Expressed in aorta and 107 other cell types or tissues"/>
</dbReference>
<dbReference type="GO" id="GO:0005912">
    <property type="term" value="C:adherens junction"/>
    <property type="evidence" value="ECO:0000318"/>
    <property type="project" value="GO_Central"/>
</dbReference>
<dbReference type="GO" id="GO:0031941">
    <property type="term" value="C:filamentous actin"/>
    <property type="evidence" value="ECO:0000318"/>
    <property type="project" value="GO_Central"/>
</dbReference>
<dbReference type="GO" id="GO:0001725">
    <property type="term" value="C:stress fiber"/>
    <property type="evidence" value="ECO:0000318"/>
    <property type="project" value="GO_Central"/>
</dbReference>
<dbReference type="GO" id="GO:0030018">
    <property type="term" value="C:Z disc"/>
    <property type="evidence" value="ECO:0000318"/>
    <property type="project" value="GO_Central"/>
</dbReference>
<dbReference type="GO" id="GO:0003779">
    <property type="term" value="F:actin binding"/>
    <property type="evidence" value="ECO:0000318"/>
    <property type="project" value="GO_Central"/>
</dbReference>
<dbReference type="GO" id="GO:0046872">
    <property type="term" value="F:metal ion binding"/>
    <property type="evidence" value="ECO:0007669"/>
    <property type="project" value="UniProtKB-KW"/>
</dbReference>
<dbReference type="GO" id="GO:0051371">
    <property type="term" value="F:muscle alpha-actinin binding"/>
    <property type="evidence" value="ECO:0000318"/>
    <property type="project" value="GO_Central"/>
</dbReference>
<dbReference type="GO" id="GO:0030036">
    <property type="term" value="P:actin cytoskeleton organization"/>
    <property type="evidence" value="ECO:0000318"/>
    <property type="project" value="GO_Central"/>
</dbReference>
<dbReference type="GO" id="GO:0030154">
    <property type="term" value="P:cell differentiation"/>
    <property type="evidence" value="ECO:0007669"/>
    <property type="project" value="UniProtKB-KW"/>
</dbReference>
<dbReference type="GO" id="GO:0007507">
    <property type="term" value="P:heart development"/>
    <property type="evidence" value="ECO:0000318"/>
    <property type="project" value="GO_Central"/>
</dbReference>
<dbReference type="GO" id="GO:0061061">
    <property type="term" value="P:muscle structure development"/>
    <property type="evidence" value="ECO:0000318"/>
    <property type="project" value="GO_Central"/>
</dbReference>
<dbReference type="GO" id="GO:0001503">
    <property type="term" value="P:ossification"/>
    <property type="evidence" value="ECO:0007669"/>
    <property type="project" value="UniProtKB-KW"/>
</dbReference>
<dbReference type="CDD" id="cd09452">
    <property type="entry name" value="LIM1_Enigma"/>
    <property type="match status" value="1"/>
</dbReference>
<dbReference type="CDD" id="cd09458">
    <property type="entry name" value="LIM3_Enigma"/>
    <property type="match status" value="1"/>
</dbReference>
<dbReference type="CDD" id="cd06753">
    <property type="entry name" value="PDZ_PDLIM-like"/>
    <property type="match status" value="1"/>
</dbReference>
<dbReference type="FunFam" id="2.30.42.10:FF:000019">
    <property type="entry name" value="LIM domain binding 3 isoform 1"/>
    <property type="match status" value="1"/>
</dbReference>
<dbReference type="FunFam" id="2.10.110.10:FF:000010">
    <property type="entry name" value="PDZ and LIM domain protein 5"/>
    <property type="match status" value="1"/>
</dbReference>
<dbReference type="FunFam" id="2.10.110.10:FF:000014">
    <property type="entry name" value="PDZ and LIM domain protein 5"/>
    <property type="match status" value="1"/>
</dbReference>
<dbReference type="FunFam" id="2.10.110.10:FF:000020">
    <property type="entry name" value="PDZ and LIM domain protein 5"/>
    <property type="match status" value="1"/>
</dbReference>
<dbReference type="Gene3D" id="2.30.42.10">
    <property type="match status" value="1"/>
</dbReference>
<dbReference type="Gene3D" id="2.10.110.10">
    <property type="entry name" value="Cysteine Rich Protein"/>
    <property type="match status" value="3"/>
</dbReference>
<dbReference type="InterPro" id="IPR001478">
    <property type="entry name" value="PDZ"/>
</dbReference>
<dbReference type="InterPro" id="IPR050604">
    <property type="entry name" value="PDZ-LIM_domain"/>
</dbReference>
<dbReference type="InterPro" id="IPR036034">
    <property type="entry name" value="PDZ_sf"/>
</dbReference>
<dbReference type="InterPro" id="IPR001781">
    <property type="entry name" value="Znf_LIM"/>
</dbReference>
<dbReference type="PANTHER" id="PTHR24214:SF0">
    <property type="entry name" value="PDZ AND LIM DOMAIN PROTEIN 7"/>
    <property type="match status" value="1"/>
</dbReference>
<dbReference type="PANTHER" id="PTHR24214">
    <property type="entry name" value="PDZ AND LIM DOMAIN PROTEIN ZASP"/>
    <property type="match status" value="1"/>
</dbReference>
<dbReference type="Pfam" id="PF00412">
    <property type="entry name" value="LIM"/>
    <property type="match status" value="3"/>
</dbReference>
<dbReference type="Pfam" id="PF00595">
    <property type="entry name" value="PDZ"/>
    <property type="match status" value="1"/>
</dbReference>
<dbReference type="SMART" id="SM00132">
    <property type="entry name" value="LIM"/>
    <property type="match status" value="3"/>
</dbReference>
<dbReference type="SMART" id="SM00228">
    <property type="entry name" value="PDZ"/>
    <property type="match status" value="1"/>
</dbReference>
<dbReference type="SUPFAM" id="SSF57716">
    <property type="entry name" value="Glucocorticoid receptor-like (DNA-binding domain)"/>
    <property type="match status" value="4"/>
</dbReference>
<dbReference type="SUPFAM" id="SSF50156">
    <property type="entry name" value="PDZ domain-like"/>
    <property type="match status" value="1"/>
</dbReference>
<dbReference type="PROSITE" id="PS00478">
    <property type="entry name" value="LIM_DOMAIN_1"/>
    <property type="match status" value="2"/>
</dbReference>
<dbReference type="PROSITE" id="PS50023">
    <property type="entry name" value="LIM_DOMAIN_2"/>
    <property type="match status" value="3"/>
</dbReference>
<dbReference type="PROSITE" id="PS50106">
    <property type="entry name" value="PDZ"/>
    <property type="match status" value="1"/>
</dbReference>
<organism>
    <name type="scientific">Bos taurus</name>
    <name type="common">Bovine</name>
    <dbReference type="NCBI Taxonomy" id="9913"/>
    <lineage>
        <taxon>Eukaryota</taxon>
        <taxon>Metazoa</taxon>
        <taxon>Chordata</taxon>
        <taxon>Craniata</taxon>
        <taxon>Vertebrata</taxon>
        <taxon>Euteleostomi</taxon>
        <taxon>Mammalia</taxon>
        <taxon>Eutheria</taxon>
        <taxon>Laurasiatheria</taxon>
        <taxon>Artiodactyla</taxon>
        <taxon>Ruminantia</taxon>
        <taxon>Pecora</taxon>
        <taxon>Bovidae</taxon>
        <taxon>Bovinae</taxon>
        <taxon>Bos</taxon>
    </lineage>
</organism>
<protein>
    <recommendedName>
        <fullName>PDZ and LIM domain protein 7</fullName>
    </recommendedName>
</protein>
<accession>Q3SX40</accession>
<accession>Q5E9L1</accession>
<proteinExistence type="evidence at transcript level"/>